<gene>
    <name evidence="1" type="primary">metK</name>
    <name type="ordered locus">MMAR_2205</name>
</gene>
<comment type="function">
    <text evidence="1">Catalyzes the formation of S-adenosylmethionine (AdoMet) from methionine and ATP. The overall synthetic reaction is composed of two sequential steps, AdoMet formation and the subsequent tripolyphosphate hydrolysis which occurs prior to release of AdoMet from the enzyme.</text>
</comment>
<comment type="catalytic activity">
    <reaction evidence="1">
        <text>L-methionine + ATP + H2O = S-adenosyl-L-methionine + phosphate + diphosphate</text>
        <dbReference type="Rhea" id="RHEA:21080"/>
        <dbReference type="ChEBI" id="CHEBI:15377"/>
        <dbReference type="ChEBI" id="CHEBI:30616"/>
        <dbReference type="ChEBI" id="CHEBI:33019"/>
        <dbReference type="ChEBI" id="CHEBI:43474"/>
        <dbReference type="ChEBI" id="CHEBI:57844"/>
        <dbReference type="ChEBI" id="CHEBI:59789"/>
        <dbReference type="EC" id="2.5.1.6"/>
    </reaction>
</comment>
<comment type="cofactor">
    <cofactor evidence="1">
        <name>Mg(2+)</name>
        <dbReference type="ChEBI" id="CHEBI:18420"/>
    </cofactor>
    <text evidence="1">Binds 2 divalent ions per subunit.</text>
</comment>
<comment type="cofactor">
    <cofactor evidence="1">
        <name>K(+)</name>
        <dbReference type="ChEBI" id="CHEBI:29103"/>
    </cofactor>
    <text evidence="1">Binds 1 potassium ion per subunit.</text>
</comment>
<comment type="pathway">
    <text evidence="1">Amino-acid biosynthesis; S-adenosyl-L-methionine biosynthesis; S-adenosyl-L-methionine from L-methionine: step 1/1.</text>
</comment>
<comment type="subunit">
    <text evidence="1">Homotetramer; dimer of dimers.</text>
</comment>
<comment type="subcellular location">
    <subcellularLocation>
        <location evidence="1">Cytoplasm</location>
    </subcellularLocation>
</comment>
<comment type="similarity">
    <text evidence="1">Belongs to the AdoMet synthase family.</text>
</comment>
<accession>B2HP50</accession>
<dbReference type="EC" id="2.5.1.6" evidence="1"/>
<dbReference type="EMBL" id="CP000854">
    <property type="protein sequence ID" value="ACC40654.1"/>
    <property type="molecule type" value="Genomic_DNA"/>
</dbReference>
<dbReference type="RefSeq" id="WP_012393969.1">
    <property type="nucleotide sequence ID" value="NC_010612.1"/>
</dbReference>
<dbReference type="PDB" id="3RV2">
    <property type="method" value="X-ray"/>
    <property type="resolution" value="2.00 A"/>
    <property type="chains" value="A/B=1-403"/>
</dbReference>
<dbReference type="PDBsum" id="3RV2"/>
<dbReference type="SMR" id="B2HP50"/>
<dbReference type="STRING" id="216594.MMAR_2205"/>
<dbReference type="GeneID" id="34341123"/>
<dbReference type="KEGG" id="mmi:MMAR_2205"/>
<dbReference type="eggNOG" id="COG0192">
    <property type="taxonomic scope" value="Bacteria"/>
</dbReference>
<dbReference type="HOGENOM" id="CLU_041802_1_1_11"/>
<dbReference type="OrthoDB" id="9801686at2"/>
<dbReference type="UniPathway" id="UPA00315">
    <property type="reaction ID" value="UER00080"/>
</dbReference>
<dbReference type="EvolutionaryTrace" id="B2HP50"/>
<dbReference type="Proteomes" id="UP000001190">
    <property type="component" value="Chromosome"/>
</dbReference>
<dbReference type="GO" id="GO:0005737">
    <property type="term" value="C:cytoplasm"/>
    <property type="evidence" value="ECO:0007669"/>
    <property type="project" value="UniProtKB-SubCell"/>
</dbReference>
<dbReference type="GO" id="GO:0005524">
    <property type="term" value="F:ATP binding"/>
    <property type="evidence" value="ECO:0007669"/>
    <property type="project" value="UniProtKB-UniRule"/>
</dbReference>
<dbReference type="GO" id="GO:0000287">
    <property type="term" value="F:magnesium ion binding"/>
    <property type="evidence" value="ECO:0007669"/>
    <property type="project" value="UniProtKB-UniRule"/>
</dbReference>
<dbReference type="GO" id="GO:0004478">
    <property type="term" value="F:methionine adenosyltransferase activity"/>
    <property type="evidence" value="ECO:0007669"/>
    <property type="project" value="UniProtKB-UniRule"/>
</dbReference>
<dbReference type="GO" id="GO:0006730">
    <property type="term" value="P:one-carbon metabolic process"/>
    <property type="evidence" value="ECO:0007669"/>
    <property type="project" value="UniProtKB-KW"/>
</dbReference>
<dbReference type="GO" id="GO:0006556">
    <property type="term" value="P:S-adenosylmethionine biosynthetic process"/>
    <property type="evidence" value="ECO:0007669"/>
    <property type="project" value="UniProtKB-UniRule"/>
</dbReference>
<dbReference type="CDD" id="cd18079">
    <property type="entry name" value="S-AdoMet_synt"/>
    <property type="match status" value="1"/>
</dbReference>
<dbReference type="FunFam" id="3.30.300.10:FF:000006">
    <property type="entry name" value="S-adenosylmethionine synthase"/>
    <property type="match status" value="1"/>
</dbReference>
<dbReference type="Gene3D" id="3.30.300.10">
    <property type="match status" value="3"/>
</dbReference>
<dbReference type="HAMAP" id="MF_00086">
    <property type="entry name" value="S_AdoMet_synth1"/>
    <property type="match status" value="1"/>
</dbReference>
<dbReference type="InterPro" id="IPR022631">
    <property type="entry name" value="ADOMET_SYNTHASE_CS"/>
</dbReference>
<dbReference type="InterPro" id="IPR022630">
    <property type="entry name" value="S-AdoMet_synt_C"/>
</dbReference>
<dbReference type="InterPro" id="IPR022629">
    <property type="entry name" value="S-AdoMet_synt_central"/>
</dbReference>
<dbReference type="InterPro" id="IPR022628">
    <property type="entry name" value="S-AdoMet_synt_N"/>
</dbReference>
<dbReference type="InterPro" id="IPR002133">
    <property type="entry name" value="S-AdoMet_synthetase"/>
</dbReference>
<dbReference type="InterPro" id="IPR022636">
    <property type="entry name" value="S-AdoMet_synthetase_sfam"/>
</dbReference>
<dbReference type="NCBIfam" id="TIGR01034">
    <property type="entry name" value="metK"/>
    <property type="match status" value="1"/>
</dbReference>
<dbReference type="PANTHER" id="PTHR11964">
    <property type="entry name" value="S-ADENOSYLMETHIONINE SYNTHETASE"/>
    <property type="match status" value="1"/>
</dbReference>
<dbReference type="Pfam" id="PF02773">
    <property type="entry name" value="S-AdoMet_synt_C"/>
    <property type="match status" value="1"/>
</dbReference>
<dbReference type="Pfam" id="PF02772">
    <property type="entry name" value="S-AdoMet_synt_M"/>
    <property type="match status" value="1"/>
</dbReference>
<dbReference type="Pfam" id="PF00438">
    <property type="entry name" value="S-AdoMet_synt_N"/>
    <property type="match status" value="1"/>
</dbReference>
<dbReference type="PIRSF" id="PIRSF000497">
    <property type="entry name" value="MAT"/>
    <property type="match status" value="1"/>
</dbReference>
<dbReference type="SUPFAM" id="SSF55973">
    <property type="entry name" value="S-adenosylmethionine synthetase"/>
    <property type="match status" value="3"/>
</dbReference>
<dbReference type="PROSITE" id="PS00376">
    <property type="entry name" value="ADOMET_SYNTHASE_1"/>
    <property type="match status" value="1"/>
</dbReference>
<dbReference type="PROSITE" id="PS00377">
    <property type="entry name" value="ADOMET_SYNTHASE_2"/>
    <property type="match status" value="1"/>
</dbReference>
<protein>
    <recommendedName>
        <fullName evidence="1">S-adenosylmethionine synthase</fullName>
        <shortName evidence="1">AdoMet synthase</shortName>
        <ecNumber evidence="1">2.5.1.6</ecNumber>
    </recommendedName>
    <alternativeName>
        <fullName evidence="1">MAT</fullName>
    </alternativeName>
    <alternativeName>
        <fullName evidence="1">Methionine adenosyltransferase</fullName>
    </alternativeName>
</protein>
<sequence>MSEKGRLFTSESVTEGHPDKICDAVSDSVLDALLAADPRSRVAVETLVTTGQVHVVGEVTTTAKEAFADITNIVRERILDIGYDSSDKGFDGASCGVNIGIGAQSPDIAQGVDTAHEARVEGAADPLDAQGAGDQGLMFGYAINDTPELMPLPIALAHRLSRRLTEVRKNGVLPYLRPDGKTQVTIAYEDRVPVRLDTVVISTQHADDIDLVKTLDPDIREQVLKTVLDDLAHDTLDASAVRVLVNPTGKFVLGGPMGDAGLTGRKIIVDTYGGWARHGGGAFSGKDPSKVDRSAAYAMRWVAKNVVAAGLAERVEVQVAYAIGKAAPVGLFVETFGSEAVDPVKIEKAIGEVFDLRPGAIIRDLNLLRPIYAPTAAYGHFGRTDVDLPWERLDKVDDLKRAI</sequence>
<evidence type="ECO:0000255" key="1">
    <source>
        <dbReference type="HAMAP-Rule" id="MF_00086"/>
    </source>
</evidence>
<evidence type="ECO:0007744" key="2">
    <source>
        <dbReference type="PDB" id="3RV2"/>
    </source>
</evidence>
<evidence type="ECO:0007829" key="3">
    <source>
        <dbReference type="PDB" id="3RV2"/>
    </source>
</evidence>
<organism>
    <name type="scientific">Mycobacterium marinum (strain ATCC BAA-535 / M)</name>
    <dbReference type="NCBI Taxonomy" id="216594"/>
    <lineage>
        <taxon>Bacteria</taxon>
        <taxon>Bacillati</taxon>
        <taxon>Actinomycetota</taxon>
        <taxon>Actinomycetes</taxon>
        <taxon>Mycobacteriales</taxon>
        <taxon>Mycobacteriaceae</taxon>
        <taxon>Mycobacterium</taxon>
        <taxon>Mycobacterium ulcerans group</taxon>
    </lineage>
</organism>
<keyword id="KW-0002">3D-structure</keyword>
<keyword id="KW-0067">ATP-binding</keyword>
<keyword id="KW-0963">Cytoplasm</keyword>
<keyword id="KW-0460">Magnesium</keyword>
<keyword id="KW-0479">Metal-binding</keyword>
<keyword id="KW-0547">Nucleotide-binding</keyword>
<keyword id="KW-0554">One-carbon metabolism</keyword>
<keyword id="KW-0630">Potassium</keyword>
<keyword id="KW-1185">Reference proteome</keyword>
<keyword id="KW-0808">Transferase</keyword>
<feature type="chain" id="PRO_1000093065" description="S-adenosylmethionine synthase">
    <location>
        <begin position="1"/>
        <end position="403"/>
    </location>
</feature>
<feature type="region of interest" description="Flexible loop" evidence="1">
    <location>
        <begin position="104"/>
        <end position="114"/>
    </location>
</feature>
<feature type="binding site" description="in other chain" evidence="1">
    <location>
        <position position="17"/>
    </location>
    <ligand>
        <name>ATP</name>
        <dbReference type="ChEBI" id="CHEBI:30616"/>
        <note>ligand shared between two neighboring subunits</note>
    </ligand>
</feature>
<feature type="binding site" evidence="1">
    <location>
        <position position="19"/>
    </location>
    <ligand>
        <name>Mg(2+)</name>
        <dbReference type="ChEBI" id="CHEBI:18420"/>
    </ligand>
</feature>
<feature type="binding site" evidence="1">
    <location>
        <position position="45"/>
    </location>
    <ligand>
        <name>K(+)</name>
        <dbReference type="ChEBI" id="CHEBI:29103"/>
    </ligand>
</feature>
<feature type="binding site" description="in other chain" evidence="1">
    <location>
        <position position="58"/>
    </location>
    <ligand>
        <name>L-methionine</name>
        <dbReference type="ChEBI" id="CHEBI:57844"/>
        <note>ligand shared between two neighboring subunits</note>
    </ligand>
</feature>
<feature type="binding site" description="in other chain" evidence="1">
    <location>
        <position position="104"/>
    </location>
    <ligand>
        <name>L-methionine</name>
        <dbReference type="ChEBI" id="CHEBI:57844"/>
        <note>ligand shared between two neighboring subunits</note>
    </ligand>
</feature>
<feature type="binding site" description="in other chain" evidence="1">
    <location>
        <begin position="179"/>
        <end position="181"/>
    </location>
    <ligand>
        <name>ATP</name>
        <dbReference type="ChEBI" id="CHEBI:30616"/>
        <note>ligand shared between two neighboring subunits</note>
    </ligand>
</feature>
<feature type="binding site" description="in other chain" evidence="1">
    <location>
        <begin position="250"/>
        <end position="251"/>
    </location>
    <ligand>
        <name>ATP</name>
        <dbReference type="ChEBI" id="CHEBI:30616"/>
        <note>ligand shared between two neighboring subunits</note>
    </ligand>
</feature>
<feature type="binding site" evidence="1">
    <location>
        <position position="259"/>
    </location>
    <ligand>
        <name>ATP</name>
        <dbReference type="ChEBI" id="CHEBI:30616"/>
        <note>ligand shared between two neighboring subunits</note>
    </ligand>
</feature>
<feature type="binding site" evidence="1">
    <location>
        <position position="259"/>
    </location>
    <ligand>
        <name>L-methionine</name>
        <dbReference type="ChEBI" id="CHEBI:57844"/>
        <note>ligand shared between two neighboring subunits</note>
    </ligand>
</feature>
<feature type="binding site" description="in other chain" evidence="1">
    <location>
        <begin position="265"/>
        <end position="266"/>
    </location>
    <ligand>
        <name>ATP</name>
        <dbReference type="ChEBI" id="CHEBI:30616"/>
        <note>ligand shared between two neighboring subunits</note>
    </ligand>
</feature>
<feature type="binding site" evidence="1">
    <location>
        <position position="282"/>
    </location>
    <ligand>
        <name>ATP</name>
        <dbReference type="ChEBI" id="CHEBI:30616"/>
        <note>ligand shared between two neighboring subunits</note>
    </ligand>
</feature>
<feature type="binding site" evidence="1">
    <location>
        <position position="286"/>
    </location>
    <ligand>
        <name>ATP</name>
        <dbReference type="ChEBI" id="CHEBI:30616"/>
        <note>ligand shared between two neighboring subunits</note>
    </ligand>
</feature>
<feature type="binding site" description="in other chain" evidence="1">
    <location>
        <position position="290"/>
    </location>
    <ligand>
        <name>L-methionine</name>
        <dbReference type="ChEBI" id="CHEBI:57844"/>
        <note>ligand shared between two neighboring subunits</note>
    </ligand>
</feature>
<feature type="strand" evidence="3">
    <location>
        <begin position="6"/>
        <end position="13"/>
    </location>
</feature>
<feature type="helix" evidence="3">
    <location>
        <begin position="18"/>
        <end position="36"/>
    </location>
</feature>
<feature type="strand" evidence="3">
    <location>
        <begin position="41"/>
        <end position="49"/>
    </location>
</feature>
<feature type="strand" evidence="3">
    <location>
        <begin position="52"/>
        <end position="60"/>
    </location>
</feature>
<feature type="helix" evidence="3">
    <location>
        <begin position="64"/>
        <end position="68"/>
    </location>
</feature>
<feature type="helix" evidence="3">
    <location>
        <begin position="70"/>
        <end position="81"/>
    </location>
</feature>
<feature type="helix" evidence="3">
    <location>
        <begin position="86"/>
        <end position="88"/>
    </location>
</feature>
<feature type="turn" evidence="3">
    <location>
        <begin position="92"/>
        <end position="94"/>
    </location>
</feature>
<feature type="strand" evidence="3">
    <location>
        <begin position="95"/>
        <end position="104"/>
    </location>
</feature>
<feature type="strand" evidence="3">
    <location>
        <begin position="136"/>
        <end position="143"/>
    </location>
</feature>
<feature type="helix" evidence="3">
    <location>
        <begin position="152"/>
        <end position="169"/>
    </location>
</feature>
<feature type="strand" evidence="3">
    <location>
        <begin position="171"/>
        <end position="173"/>
    </location>
</feature>
<feature type="strand" evidence="3">
    <location>
        <begin position="176"/>
        <end position="189"/>
    </location>
</feature>
<feature type="strand" evidence="3">
    <location>
        <begin position="192"/>
        <end position="205"/>
    </location>
</feature>
<feature type="turn" evidence="3">
    <location>
        <begin position="211"/>
        <end position="214"/>
    </location>
</feature>
<feature type="helix" evidence="3">
    <location>
        <begin position="215"/>
        <end position="222"/>
    </location>
</feature>
<feature type="helix" evidence="3">
    <location>
        <begin position="224"/>
        <end position="231"/>
    </location>
</feature>
<feature type="strand" evidence="3">
    <location>
        <begin position="242"/>
        <end position="246"/>
    </location>
</feature>
<feature type="turn" evidence="3">
    <location>
        <begin position="255"/>
        <end position="258"/>
    </location>
</feature>
<feature type="strand" evidence="3">
    <location>
        <begin position="259"/>
        <end position="262"/>
    </location>
</feature>
<feature type="turn" evidence="3">
    <location>
        <begin position="267"/>
        <end position="274"/>
    </location>
</feature>
<feature type="helix" evidence="3">
    <location>
        <begin position="291"/>
        <end position="308"/>
    </location>
</feature>
<feature type="strand" evidence="3">
    <location>
        <begin position="311"/>
        <end position="321"/>
    </location>
</feature>
<feature type="strand" evidence="3">
    <location>
        <begin position="329"/>
        <end position="334"/>
    </location>
</feature>
<feature type="strand" evidence="3">
    <location>
        <begin position="339"/>
        <end position="341"/>
    </location>
</feature>
<feature type="helix" evidence="3">
    <location>
        <begin position="343"/>
        <end position="353"/>
    </location>
</feature>
<feature type="helix" evidence="3">
    <location>
        <begin position="358"/>
        <end position="364"/>
    </location>
</feature>
<feature type="strand" evidence="3">
    <location>
        <begin position="368"/>
        <end position="370"/>
    </location>
</feature>
<feature type="helix" evidence="3">
    <location>
        <begin position="373"/>
        <end position="376"/>
    </location>
</feature>
<feature type="strand" evidence="3">
    <location>
        <begin position="380"/>
        <end position="382"/>
    </location>
</feature>
<feature type="strand" evidence="3">
    <location>
        <begin position="384"/>
        <end position="386"/>
    </location>
</feature>
<feature type="helix" evidence="3">
    <location>
        <begin position="389"/>
        <end position="391"/>
    </location>
</feature>
<feature type="helix" evidence="3">
    <location>
        <begin position="396"/>
        <end position="402"/>
    </location>
</feature>
<name>METK_MYCMM</name>
<proteinExistence type="evidence at protein level"/>
<reference key="1">
    <citation type="journal article" date="2008" name="Genome Res.">
        <title>Insights from the complete genome sequence of Mycobacterium marinum on the evolution of Mycobacterium tuberculosis.</title>
        <authorList>
            <person name="Stinear T.P."/>
            <person name="Seemann T."/>
            <person name="Harrison P.F."/>
            <person name="Jenkin G.A."/>
            <person name="Davies J.K."/>
            <person name="Johnson P.D."/>
            <person name="Abdellah Z."/>
            <person name="Arrowsmith C."/>
            <person name="Chillingworth T."/>
            <person name="Churcher C."/>
            <person name="Clarke K."/>
            <person name="Cronin A."/>
            <person name="Davis P."/>
            <person name="Goodhead I."/>
            <person name="Holroyd N."/>
            <person name="Jagels K."/>
            <person name="Lord A."/>
            <person name="Moule S."/>
            <person name="Mungall K."/>
            <person name="Norbertczak H."/>
            <person name="Quail M.A."/>
            <person name="Rabbinowitsch E."/>
            <person name="Walker D."/>
            <person name="White B."/>
            <person name="Whitehead S."/>
            <person name="Small P.L."/>
            <person name="Brosch R."/>
            <person name="Ramakrishnan L."/>
            <person name="Fischbach M.A."/>
            <person name="Parkhill J."/>
            <person name="Cole S.T."/>
        </authorList>
    </citation>
    <scope>NUCLEOTIDE SEQUENCE [LARGE SCALE GENOMIC DNA]</scope>
    <source>
        <strain>ATCC BAA-535 / M</strain>
    </source>
</reference>
<reference evidence="2" key="2">
    <citation type="journal article" date="2015" name="Tuberculosis">
        <title>Increasing the structural coverage of tuberculosis drug targets.</title>
        <authorList>
            <person name="Baugh L."/>
            <person name="Phan I."/>
            <person name="Begley D.W."/>
            <person name="Clifton M.C."/>
            <person name="Armour B."/>
            <person name="Dranow D.M."/>
            <person name="Taylor B.M."/>
            <person name="Muruthi M.M."/>
            <person name="Abendroth J."/>
            <person name="Fairman J.W."/>
            <person name="Fox D. III"/>
            <person name="Dieterich S.H."/>
            <person name="Staker B.L."/>
            <person name="Gardberg A.S."/>
            <person name="Choi R."/>
            <person name="Hewitt S.N."/>
            <person name="Napuli A.J."/>
            <person name="Myers J."/>
            <person name="Barrett L.K."/>
            <person name="Zhang Y."/>
            <person name="Ferrell M."/>
            <person name="Mundt E."/>
            <person name="Thompkins K."/>
            <person name="Tran N."/>
            <person name="Lyons-Abbott S."/>
            <person name="Abramov A."/>
            <person name="Sekar A."/>
            <person name="Serbzhinskiy D."/>
            <person name="Lorimer D."/>
            <person name="Buchko G.W."/>
            <person name="Stacy R."/>
            <person name="Stewart L.J."/>
            <person name="Edwards T.E."/>
            <person name="Van Voorhis W.C."/>
            <person name="Myler P.J."/>
        </authorList>
    </citation>
    <scope>X-RAY CRYSTALLOGRAPHY (2.00 ANGSTROMS)</scope>
</reference>